<accession>Q97FL9</accession>
<comment type="function">
    <text evidence="1">Catalyzes the deamination of various vicinal amino-alcohols to oxo compounds. Allows this organism to utilize ethanolamine as the sole source of nitrogen and carbon in the presence of external vitamin B12.</text>
</comment>
<comment type="catalytic activity">
    <reaction evidence="1">
        <text>ethanolamine = acetaldehyde + NH4(+)</text>
        <dbReference type="Rhea" id="RHEA:15313"/>
        <dbReference type="ChEBI" id="CHEBI:15343"/>
        <dbReference type="ChEBI" id="CHEBI:28938"/>
        <dbReference type="ChEBI" id="CHEBI:57603"/>
        <dbReference type="EC" id="4.3.1.7"/>
    </reaction>
</comment>
<comment type="cofactor">
    <cofactor evidence="1">
        <name>adenosylcob(III)alamin</name>
        <dbReference type="ChEBI" id="CHEBI:18408"/>
    </cofactor>
    <text evidence="1">Binds between the large and small subunits.</text>
</comment>
<comment type="pathway">
    <text evidence="1">Amine and polyamine degradation; ethanolamine degradation.</text>
</comment>
<comment type="subunit">
    <text evidence="1">The basic unit is a heterodimer which dimerizes to form tetramers. The heterotetramers trimerize; 6 large subunits form a core ring with 6 small subunits projecting outwards.</text>
</comment>
<comment type="subcellular location">
    <subcellularLocation>
        <location evidence="1">Bacterial microcompartment</location>
    </subcellularLocation>
</comment>
<comment type="similarity">
    <text evidence="1">Belongs to the EutC family.</text>
</comment>
<proteinExistence type="inferred from homology"/>
<gene>
    <name evidence="1" type="primary">eutC</name>
    <name type="ordered locus">CA_C2717</name>
</gene>
<dbReference type="EC" id="4.3.1.7" evidence="1"/>
<dbReference type="EMBL" id="AE001437">
    <property type="protein sequence ID" value="AAK80663.1"/>
    <property type="molecule type" value="Genomic_DNA"/>
</dbReference>
<dbReference type="PIR" id="D97234">
    <property type="entry name" value="D97234"/>
</dbReference>
<dbReference type="RefSeq" id="NP_349323.1">
    <property type="nucleotide sequence ID" value="NC_003030.1"/>
</dbReference>
<dbReference type="RefSeq" id="WP_010966004.1">
    <property type="nucleotide sequence ID" value="NC_003030.1"/>
</dbReference>
<dbReference type="SMR" id="Q97FL9"/>
<dbReference type="STRING" id="272562.CA_C2717"/>
<dbReference type="GeneID" id="44999205"/>
<dbReference type="KEGG" id="cac:CA_C2717"/>
<dbReference type="PATRIC" id="fig|272562.8.peg.2906"/>
<dbReference type="eggNOG" id="COG4302">
    <property type="taxonomic scope" value="Bacteria"/>
</dbReference>
<dbReference type="HOGENOM" id="CLU_068224_1_0_9"/>
<dbReference type="OrthoDB" id="114248at2"/>
<dbReference type="UniPathway" id="UPA00560"/>
<dbReference type="Proteomes" id="UP000000814">
    <property type="component" value="Chromosome"/>
</dbReference>
<dbReference type="GO" id="GO:0009350">
    <property type="term" value="C:ethanolamine ammonia-lyase complex"/>
    <property type="evidence" value="ECO:0007669"/>
    <property type="project" value="UniProtKB-UniRule"/>
</dbReference>
<dbReference type="GO" id="GO:0031471">
    <property type="term" value="C:ethanolamine degradation polyhedral organelle"/>
    <property type="evidence" value="ECO:0007669"/>
    <property type="project" value="UniProtKB-UniRule"/>
</dbReference>
<dbReference type="GO" id="GO:0031419">
    <property type="term" value="F:cobalamin binding"/>
    <property type="evidence" value="ECO:0007669"/>
    <property type="project" value="UniProtKB-UniRule"/>
</dbReference>
<dbReference type="GO" id="GO:0008851">
    <property type="term" value="F:ethanolamine ammonia-lyase activity"/>
    <property type="evidence" value="ECO:0007669"/>
    <property type="project" value="UniProtKB-UniRule"/>
</dbReference>
<dbReference type="GO" id="GO:0006520">
    <property type="term" value="P:amino acid metabolic process"/>
    <property type="evidence" value="ECO:0007669"/>
    <property type="project" value="InterPro"/>
</dbReference>
<dbReference type="GO" id="GO:0046336">
    <property type="term" value="P:ethanolamine catabolic process"/>
    <property type="evidence" value="ECO:0007669"/>
    <property type="project" value="UniProtKB-UniRule"/>
</dbReference>
<dbReference type="Gene3D" id="3.40.50.11240">
    <property type="entry name" value="Ethanolamine ammonia-lyase light chain (EutC)"/>
    <property type="match status" value="1"/>
</dbReference>
<dbReference type="Gene3D" id="1.10.30.40">
    <property type="entry name" value="Ethanolamine ammonia-lyase light chain (EutC), N-terminal domain"/>
    <property type="match status" value="1"/>
</dbReference>
<dbReference type="HAMAP" id="MF_00601">
    <property type="entry name" value="EutC"/>
    <property type="match status" value="1"/>
</dbReference>
<dbReference type="InterPro" id="IPR009246">
    <property type="entry name" value="EutC"/>
</dbReference>
<dbReference type="InterPro" id="IPR042251">
    <property type="entry name" value="EutC_C"/>
</dbReference>
<dbReference type="InterPro" id="IPR042255">
    <property type="entry name" value="EutC_N"/>
</dbReference>
<dbReference type="NCBIfam" id="NF003971">
    <property type="entry name" value="PRK05465.1"/>
    <property type="match status" value="1"/>
</dbReference>
<dbReference type="PANTHER" id="PTHR39330">
    <property type="entry name" value="ETHANOLAMINE AMMONIA-LYASE LIGHT CHAIN"/>
    <property type="match status" value="1"/>
</dbReference>
<dbReference type="PANTHER" id="PTHR39330:SF1">
    <property type="entry name" value="ETHANOLAMINE AMMONIA-LYASE SMALL SUBUNIT"/>
    <property type="match status" value="1"/>
</dbReference>
<dbReference type="Pfam" id="PF05985">
    <property type="entry name" value="EutC"/>
    <property type="match status" value="1"/>
</dbReference>
<dbReference type="PIRSF" id="PIRSF018982">
    <property type="entry name" value="EutC"/>
    <property type="match status" value="1"/>
</dbReference>
<name>EUTC_CLOAB</name>
<evidence type="ECO:0000255" key="1">
    <source>
        <dbReference type="HAMAP-Rule" id="MF_00601"/>
    </source>
</evidence>
<reference key="1">
    <citation type="journal article" date="2001" name="J. Bacteriol.">
        <title>Genome sequence and comparative analysis of the solvent-producing bacterium Clostridium acetobutylicum.</title>
        <authorList>
            <person name="Noelling J."/>
            <person name="Breton G."/>
            <person name="Omelchenko M.V."/>
            <person name="Makarova K.S."/>
            <person name="Zeng Q."/>
            <person name="Gibson R."/>
            <person name="Lee H.M."/>
            <person name="Dubois J."/>
            <person name="Qiu D."/>
            <person name="Hitti J."/>
            <person name="Wolf Y.I."/>
            <person name="Tatusov R.L."/>
            <person name="Sabathe F."/>
            <person name="Doucette-Stamm L.A."/>
            <person name="Soucaille P."/>
            <person name="Daly M.J."/>
            <person name="Bennett G.N."/>
            <person name="Koonin E.V."/>
            <person name="Smith D.R."/>
        </authorList>
    </citation>
    <scope>NUCLEOTIDE SEQUENCE [LARGE SCALE GENOMIC DNA]</scope>
    <source>
        <strain>ATCC 824 / DSM 792 / JCM 1419 / IAM 19013 / LMG 5710 / NBRC 13948 / NRRL B-527 / VKM B-1787 / 2291 / W</strain>
    </source>
</reference>
<sequence>MENLLKIYDIKEEELSELKALTPARICVGRAGTRLKTNTFLKFRADHAVAMDAVWSSVDEKLIDTLNFLKVQTLAKDKEEYITRPDLGRKFSEETLDYIKNNCINEPDVQIIAGDGLSATAINANLRKIYFVIVEKLKSRGYKVGTPIFVKYARVATMDKISEELNAKVTIILIGERPGLATGESMSSYMAYESSTKKPESQRTVVSNIHNKGIPSVDAGKEIVRIIDIMMKEKKSGVELRI</sequence>
<organism>
    <name type="scientific">Clostridium acetobutylicum (strain ATCC 824 / DSM 792 / JCM 1419 / IAM 19013 / LMG 5710 / NBRC 13948 / NRRL B-527 / VKM B-1787 / 2291 / W)</name>
    <dbReference type="NCBI Taxonomy" id="272562"/>
    <lineage>
        <taxon>Bacteria</taxon>
        <taxon>Bacillati</taxon>
        <taxon>Bacillota</taxon>
        <taxon>Clostridia</taxon>
        <taxon>Eubacteriales</taxon>
        <taxon>Clostridiaceae</taxon>
        <taxon>Clostridium</taxon>
    </lineage>
</organism>
<feature type="chain" id="PRO_0000205985" description="Ethanolamine ammonia-lyase small subunit">
    <location>
        <begin position="1"/>
        <end position="242"/>
    </location>
</feature>
<feature type="binding site" evidence="1">
    <location>
        <position position="155"/>
    </location>
    <ligand>
        <name>adenosylcob(III)alamin</name>
        <dbReference type="ChEBI" id="CHEBI:18408"/>
    </ligand>
</feature>
<feature type="binding site" evidence="1">
    <location>
        <position position="176"/>
    </location>
    <ligand>
        <name>adenosylcob(III)alamin</name>
        <dbReference type="ChEBI" id="CHEBI:18408"/>
    </ligand>
</feature>
<protein>
    <recommendedName>
        <fullName evidence="1">Ethanolamine ammonia-lyase small subunit</fullName>
        <shortName evidence="1">EAL small subunit</shortName>
        <ecNumber evidence="1">4.3.1.7</ecNumber>
    </recommendedName>
</protein>
<keyword id="KW-1283">Bacterial microcompartment</keyword>
<keyword id="KW-0846">Cobalamin</keyword>
<keyword id="KW-0170">Cobalt</keyword>
<keyword id="KW-0456">Lyase</keyword>
<keyword id="KW-1185">Reference proteome</keyword>